<proteinExistence type="inferred from homology"/>
<sequence length="112" mass="12870">MTALSNMKCEACQADAPKVTDEELAELIRMIPDWGVQVRDGVMQLERIYKFKNFKLAMAFTNKLADLAEEEFHHPGIFTEWGKVTVTWWSHSIKGLHKNDFIMAAKTDQLLV</sequence>
<evidence type="ECO:0000255" key="1">
    <source>
        <dbReference type="HAMAP-Rule" id="MF_00434"/>
    </source>
</evidence>
<dbReference type="EC" id="4.2.1.96" evidence="1"/>
<dbReference type="EMBL" id="CP000563">
    <property type="protein sequence ID" value="ABN61003.1"/>
    <property type="molecule type" value="Genomic_DNA"/>
</dbReference>
<dbReference type="RefSeq" id="WP_011846374.1">
    <property type="nucleotide sequence ID" value="NC_009052.1"/>
</dbReference>
<dbReference type="SMR" id="A3D2P0"/>
<dbReference type="STRING" id="325240.Sbal_1485"/>
<dbReference type="KEGG" id="sbl:Sbal_1485"/>
<dbReference type="HOGENOM" id="CLU_081974_2_2_6"/>
<dbReference type="OrthoDB" id="5294615at2"/>
<dbReference type="Proteomes" id="UP000001557">
    <property type="component" value="Chromosome"/>
</dbReference>
<dbReference type="GO" id="GO:0008124">
    <property type="term" value="F:4-alpha-hydroxytetrahydrobiopterin dehydratase activity"/>
    <property type="evidence" value="ECO:0007669"/>
    <property type="project" value="UniProtKB-UniRule"/>
</dbReference>
<dbReference type="GO" id="GO:0006729">
    <property type="term" value="P:tetrahydrobiopterin biosynthetic process"/>
    <property type="evidence" value="ECO:0007669"/>
    <property type="project" value="InterPro"/>
</dbReference>
<dbReference type="CDD" id="cd00913">
    <property type="entry name" value="PCD_DCoH_subfamily_a"/>
    <property type="match status" value="1"/>
</dbReference>
<dbReference type="Gene3D" id="3.30.1360.20">
    <property type="entry name" value="Transcriptional coactivator/pterin dehydratase"/>
    <property type="match status" value="1"/>
</dbReference>
<dbReference type="HAMAP" id="MF_00434">
    <property type="entry name" value="Pterin_4_alpha"/>
    <property type="match status" value="1"/>
</dbReference>
<dbReference type="InterPro" id="IPR036428">
    <property type="entry name" value="PCD_sf"/>
</dbReference>
<dbReference type="InterPro" id="IPR050376">
    <property type="entry name" value="Pterin-4-alpha-carb_dehyd"/>
</dbReference>
<dbReference type="InterPro" id="IPR001533">
    <property type="entry name" value="Pterin_deHydtase"/>
</dbReference>
<dbReference type="NCBIfam" id="NF002016">
    <property type="entry name" value="PRK00823.1-1"/>
    <property type="match status" value="1"/>
</dbReference>
<dbReference type="PANTHER" id="PTHR42805">
    <property type="entry name" value="PTERIN-4-ALPHA-CARBINOLAMINE DEHYDRATASE-RELATED"/>
    <property type="match status" value="1"/>
</dbReference>
<dbReference type="PANTHER" id="PTHR42805:SF1">
    <property type="entry name" value="PTERIN-4-ALPHA-CARBINOLAMINE DEHYDRATASE-RELATED"/>
    <property type="match status" value="1"/>
</dbReference>
<dbReference type="Pfam" id="PF01329">
    <property type="entry name" value="Pterin_4a"/>
    <property type="match status" value="1"/>
</dbReference>
<dbReference type="SUPFAM" id="SSF55248">
    <property type="entry name" value="PCD-like"/>
    <property type="match status" value="1"/>
</dbReference>
<feature type="chain" id="PRO_1000050453" description="Putative pterin-4-alpha-carbinolamine dehydratase">
    <location>
        <begin position="1"/>
        <end position="112"/>
    </location>
</feature>
<protein>
    <recommendedName>
        <fullName evidence="1">Putative pterin-4-alpha-carbinolamine dehydratase</fullName>
        <shortName evidence="1">PHS</shortName>
        <ecNumber evidence="1">4.2.1.96</ecNumber>
    </recommendedName>
    <alternativeName>
        <fullName evidence="1">4-alpha-hydroxy-tetrahydropterin dehydratase</fullName>
    </alternativeName>
    <alternativeName>
        <fullName evidence="1">Pterin carbinolamine dehydratase</fullName>
        <shortName evidence="1">PCD</shortName>
    </alternativeName>
</protein>
<keyword id="KW-0456">Lyase</keyword>
<keyword id="KW-1185">Reference proteome</keyword>
<comment type="catalytic activity">
    <reaction evidence="1">
        <text>(4aS,6R)-4a-hydroxy-L-erythro-5,6,7,8-tetrahydrobiopterin = (6R)-L-erythro-6,7-dihydrobiopterin + H2O</text>
        <dbReference type="Rhea" id="RHEA:11920"/>
        <dbReference type="ChEBI" id="CHEBI:15377"/>
        <dbReference type="ChEBI" id="CHEBI:15642"/>
        <dbReference type="ChEBI" id="CHEBI:43120"/>
        <dbReference type="EC" id="4.2.1.96"/>
    </reaction>
</comment>
<comment type="similarity">
    <text evidence="1">Belongs to the pterin-4-alpha-carbinolamine dehydratase family.</text>
</comment>
<reference key="1">
    <citation type="submission" date="2007-02" db="EMBL/GenBank/DDBJ databases">
        <title>Complete sequence of chromosome of Shewanella baltica OS155.</title>
        <authorList>
            <consortium name="US DOE Joint Genome Institute"/>
            <person name="Copeland A."/>
            <person name="Lucas S."/>
            <person name="Lapidus A."/>
            <person name="Barry K."/>
            <person name="Detter J.C."/>
            <person name="Glavina del Rio T."/>
            <person name="Hammon N."/>
            <person name="Israni S."/>
            <person name="Dalin E."/>
            <person name="Tice H."/>
            <person name="Pitluck S."/>
            <person name="Sims D.R."/>
            <person name="Brettin T."/>
            <person name="Bruce D."/>
            <person name="Han C."/>
            <person name="Tapia R."/>
            <person name="Brainard J."/>
            <person name="Schmutz J."/>
            <person name="Larimer F."/>
            <person name="Land M."/>
            <person name="Hauser L."/>
            <person name="Kyrpides N."/>
            <person name="Mikhailova N."/>
            <person name="Brettar I."/>
            <person name="Klappenbach J."/>
            <person name="Konstantinidis K."/>
            <person name="Rodrigues J."/>
            <person name="Tiedje J."/>
            <person name="Richardson P."/>
        </authorList>
    </citation>
    <scope>NUCLEOTIDE SEQUENCE [LARGE SCALE GENOMIC DNA]</scope>
    <source>
        <strain>OS155 / ATCC BAA-1091</strain>
    </source>
</reference>
<gene>
    <name type="ordered locus">Sbal_1485</name>
</gene>
<organism>
    <name type="scientific">Shewanella baltica (strain OS155 / ATCC BAA-1091)</name>
    <dbReference type="NCBI Taxonomy" id="325240"/>
    <lineage>
        <taxon>Bacteria</taxon>
        <taxon>Pseudomonadati</taxon>
        <taxon>Pseudomonadota</taxon>
        <taxon>Gammaproteobacteria</taxon>
        <taxon>Alteromonadales</taxon>
        <taxon>Shewanellaceae</taxon>
        <taxon>Shewanella</taxon>
    </lineage>
</organism>
<name>PHS_SHEB5</name>
<accession>A3D2P0</accession>